<feature type="chain" id="PRO_0000095693" description="N-acetylglucosamine repressor">
    <location>
        <begin position="1"/>
        <end position="406"/>
    </location>
</feature>
<feature type="DNA-binding region" description="H-T-H motif" evidence="1">
    <location>
        <begin position="35"/>
        <end position="44"/>
    </location>
</feature>
<evidence type="ECO:0000250" key="1"/>
<evidence type="ECO:0000305" key="2"/>
<organism>
    <name type="scientific">Escherichia coli O6:H1 (strain CFT073 / ATCC 700928 / UPEC)</name>
    <dbReference type="NCBI Taxonomy" id="199310"/>
    <lineage>
        <taxon>Bacteria</taxon>
        <taxon>Pseudomonadati</taxon>
        <taxon>Pseudomonadota</taxon>
        <taxon>Gammaproteobacteria</taxon>
        <taxon>Enterobacterales</taxon>
        <taxon>Enterobacteriaceae</taxon>
        <taxon>Escherichia</taxon>
    </lineage>
</organism>
<gene>
    <name type="primary">nagC</name>
    <name type="ordered locus">c0751</name>
</gene>
<protein>
    <recommendedName>
        <fullName>N-acetylglucosamine repressor</fullName>
    </recommendedName>
</protein>
<comment type="function">
    <text evidence="1">Acts as a repressor of the nagEBACD operon and acts both as an activator and a repressor for the transcription of the glmSU operon.</text>
</comment>
<comment type="similarity">
    <text evidence="2">Belongs to the ROK (NagC/XylR) family.</text>
</comment>
<keyword id="KW-0010">Activator</keyword>
<keyword id="KW-0119">Carbohydrate metabolism</keyword>
<keyword id="KW-0238">DNA-binding</keyword>
<keyword id="KW-1185">Reference proteome</keyword>
<keyword id="KW-0678">Repressor</keyword>
<keyword id="KW-0804">Transcription</keyword>
<keyword id="KW-0805">Transcription regulation</keyword>
<reference key="1">
    <citation type="journal article" date="2002" name="Proc. Natl. Acad. Sci. U.S.A.">
        <title>Extensive mosaic structure revealed by the complete genome sequence of uropathogenic Escherichia coli.</title>
        <authorList>
            <person name="Welch R.A."/>
            <person name="Burland V."/>
            <person name="Plunkett G. III"/>
            <person name="Redford P."/>
            <person name="Roesch P."/>
            <person name="Rasko D."/>
            <person name="Buckles E.L."/>
            <person name="Liou S.-R."/>
            <person name="Boutin A."/>
            <person name="Hackett J."/>
            <person name="Stroud D."/>
            <person name="Mayhew G.F."/>
            <person name="Rose D.J."/>
            <person name="Zhou S."/>
            <person name="Schwartz D.C."/>
            <person name="Perna N.T."/>
            <person name="Mobley H.L.T."/>
            <person name="Donnenberg M.S."/>
            <person name="Blattner F.R."/>
        </authorList>
    </citation>
    <scope>NUCLEOTIDE SEQUENCE [LARGE SCALE GENOMIC DNA]</scope>
    <source>
        <strain>CFT073 / ATCC 700928 / UPEC</strain>
    </source>
</reference>
<proteinExistence type="inferred from homology"/>
<sequence>MTPGGQAQIGNVDLVKQLNSAAVYRLIDQYGPISRIQIAEQSQLAPASVTKITRQLIERGLIKEVDQQASTGGRRAISIVTETRNFHAIGVRLGRHDATITLFDLSSKVLAEEHYPLPERTQQTLEHALLNAIAQFIDSYQRKLRELIAISVILPGLVDPDSGKIHYMPHIQVENWGLVEALEERFKVTCFVGHDIRSLALAEHYFGASQDCEDSILVRVHRGTGAGIISNGRIFIGRNGNVGEIGHIQVEPLGERCHCGNFGCLETIAANAAIEQRVLNLLKQGYQSRVPLDDCTIKTICKAANKGDSLASEVIEYVGRHLGKTIAIAINLFNPQKIVIAGEITEADKVLLPAIESCINTQALKAFRTNLPVVRSELDHRSAIGAFALVKRAMLNGILLQHLLEN</sequence>
<name>NAGC_ECOL6</name>
<dbReference type="EMBL" id="AE014075">
    <property type="protein sequence ID" value="AAN79224.1"/>
    <property type="molecule type" value="Genomic_DNA"/>
</dbReference>
<dbReference type="RefSeq" id="WP_000187594.1">
    <property type="nucleotide sequence ID" value="NZ_CP051263.1"/>
</dbReference>
<dbReference type="SMR" id="P0AF21"/>
<dbReference type="STRING" id="199310.c0751"/>
<dbReference type="GeneID" id="93776809"/>
<dbReference type="KEGG" id="ecc:c0751"/>
<dbReference type="eggNOG" id="COG1846">
    <property type="taxonomic scope" value="Bacteria"/>
</dbReference>
<dbReference type="eggNOG" id="COG1940">
    <property type="taxonomic scope" value="Bacteria"/>
</dbReference>
<dbReference type="HOGENOM" id="CLU_036604_13_1_6"/>
<dbReference type="BioCyc" id="ECOL199310:C0751-MONOMER"/>
<dbReference type="Proteomes" id="UP000001410">
    <property type="component" value="Chromosome"/>
</dbReference>
<dbReference type="GO" id="GO:0003677">
    <property type="term" value="F:DNA binding"/>
    <property type="evidence" value="ECO:0007669"/>
    <property type="project" value="UniProtKB-KW"/>
</dbReference>
<dbReference type="GO" id="GO:0003700">
    <property type="term" value="F:DNA-binding transcription factor activity"/>
    <property type="evidence" value="ECO:0007669"/>
    <property type="project" value="InterPro"/>
</dbReference>
<dbReference type="CDD" id="cd24075">
    <property type="entry name" value="ASKHA_ATPase_ROK_NagC"/>
    <property type="match status" value="1"/>
</dbReference>
<dbReference type="FunFam" id="3.30.420.40:FF:000059">
    <property type="entry name" value="N-acetylglucosamine operon transcriptional repressor"/>
    <property type="match status" value="1"/>
</dbReference>
<dbReference type="FunFam" id="3.30.420.40:FF:000065">
    <property type="entry name" value="N-acetylglucosamine repressor NagC"/>
    <property type="match status" value="1"/>
</dbReference>
<dbReference type="FunFam" id="1.10.10.10:FF:000045">
    <property type="entry name" value="ROK family transcriptional regulator"/>
    <property type="match status" value="1"/>
</dbReference>
<dbReference type="Gene3D" id="3.30.420.40">
    <property type="match status" value="2"/>
</dbReference>
<dbReference type="Gene3D" id="1.10.10.10">
    <property type="entry name" value="Winged helix-like DNA-binding domain superfamily/Winged helix DNA-binding domain"/>
    <property type="match status" value="1"/>
</dbReference>
<dbReference type="InterPro" id="IPR043129">
    <property type="entry name" value="ATPase_NBD"/>
</dbReference>
<dbReference type="InterPro" id="IPR000835">
    <property type="entry name" value="HTH_MarR-typ"/>
</dbReference>
<dbReference type="InterPro" id="IPR000600">
    <property type="entry name" value="ROK"/>
</dbReference>
<dbReference type="InterPro" id="IPR049874">
    <property type="entry name" value="ROK_cs"/>
</dbReference>
<dbReference type="InterPro" id="IPR036388">
    <property type="entry name" value="WH-like_DNA-bd_sf"/>
</dbReference>
<dbReference type="InterPro" id="IPR036390">
    <property type="entry name" value="WH_DNA-bd_sf"/>
</dbReference>
<dbReference type="PANTHER" id="PTHR18964:SF175">
    <property type="entry name" value="N-ACETYLGLUCOSAMINE REPRESSOR"/>
    <property type="match status" value="1"/>
</dbReference>
<dbReference type="PANTHER" id="PTHR18964">
    <property type="entry name" value="ROK (REPRESSOR, ORF, KINASE) FAMILY"/>
    <property type="match status" value="1"/>
</dbReference>
<dbReference type="Pfam" id="PF01047">
    <property type="entry name" value="MarR"/>
    <property type="match status" value="1"/>
</dbReference>
<dbReference type="Pfam" id="PF00480">
    <property type="entry name" value="ROK"/>
    <property type="match status" value="1"/>
</dbReference>
<dbReference type="SUPFAM" id="SSF53067">
    <property type="entry name" value="Actin-like ATPase domain"/>
    <property type="match status" value="1"/>
</dbReference>
<dbReference type="SUPFAM" id="SSF46785">
    <property type="entry name" value="Winged helix' DNA-binding domain"/>
    <property type="match status" value="1"/>
</dbReference>
<dbReference type="PROSITE" id="PS01125">
    <property type="entry name" value="ROK"/>
    <property type="match status" value="1"/>
</dbReference>
<accession>P0AF21</accession>
<accession>P15301</accession>